<dbReference type="EC" id="1.3.7.7" evidence="1"/>
<dbReference type="EMBL" id="CP000362">
    <property type="protein sequence ID" value="ABG29874.1"/>
    <property type="molecule type" value="Genomic_DNA"/>
</dbReference>
<dbReference type="RefSeq" id="WP_011566496.1">
    <property type="nucleotide sequence ID" value="NC_008209.1"/>
</dbReference>
<dbReference type="SMR" id="Q16DR9"/>
<dbReference type="STRING" id="375451.RD1_0139"/>
<dbReference type="KEGG" id="rde:RD1_0139"/>
<dbReference type="eggNOG" id="COG2710">
    <property type="taxonomic scope" value="Bacteria"/>
</dbReference>
<dbReference type="HOGENOM" id="CLU_037170_0_0_5"/>
<dbReference type="OrthoDB" id="5714774at2"/>
<dbReference type="UniPathway" id="UPA00671"/>
<dbReference type="Proteomes" id="UP000007029">
    <property type="component" value="Chromosome"/>
</dbReference>
<dbReference type="GO" id="GO:0051539">
    <property type="term" value="F:4 iron, 4 sulfur cluster binding"/>
    <property type="evidence" value="ECO:0007669"/>
    <property type="project" value="UniProtKB-UniRule"/>
</dbReference>
<dbReference type="GO" id="GO:0005524">
    <property type="term" value="F:ATP binding"/>
    <property type="evidence" value="ECO:0007669"/>
    <property type="project" value="UniProtKB-UniRule"/>
</dbReference>
<dbReference type="GO" id="GO:0046872">
    <property type="term" value="F:metal ion binding"/>
    <property type="evidence" value="ECO:0007669"/>
    <property type="project" value="UniProtKB-KW"/>
</dbReference>
<dbReference type="GO" id="GO:0016730">
    <property type="term" value="F:oxidoreductase activity, acting on iron-sulfur proteins as donors"/>
    <property type="evidence" value="ECO:0007669"/>
    <property type="project" value="InterPro"/>
</dbReference>
<dbReference type="GO" id="GO:0016636">
    <property type="term" value="F:oxidoreductase activity, acting on the CH-CH group of donors, iron-sulfur protein as acceptor"/>
    <property type="evidence" value="ECO:0007669"/>
    <property type="project" value="UniProtKB-UniRule"/>
</dbReference>
<dbReference type="GO" id="GO:0036070">
    <property type="term" value="P:light-independent bacteriochlorophyll biosynthetic process"/>
    <property type="evidence" value="ECO:0007669"/>
    <property type="project" value="UniProtKB-UniRule"/>
</dbReference>
<dbReference type="GO" id="GO:0019685">
    <property type="term" value="P:photosynthesis, dark reaction"/>
    <property type="evidence" value="ECO:0007669"/>
    <property type="project" value="InterPro"/>
</dbReference>
<dbReference type="Gene3D" id="3.40.50.1980">
    <property type="entry name" value="Nitrogenase molybdenum iron protein domain"/>
    <property type="match status" value="3"/>
</dbReference>
<dbReference type="HAMAP" id="MF_00352">
    <property type="entry name" value="ChlN_BchN"/>
    <property type="match status" value="1"/>
</dbReference>
<dbReference type="InterPro" id="IPR050293">
    <property type="entry name" value="LIPOR_BchN/ChlN"/>
</dbReference>
<dbReference type="InterPro" id="IPR000510">
    <property type="entry name" value="Nase/OxRdtase_comp1"/>
</dbReference>
<dbReference type="InterPro" id="IPR005970">
    <property type="entry name" value="Protochl_reductN"/>
</dbReference>
<dbReference type="NCBIfam" id="TIGR01279">
    <property type="entry name" value="DPOR_bchN"/>
    <property type="match status" value="1"/>
</dbReference>
<dbReference type="NCBIfam" id="NF002768">
    <property type="entry name" value="PRK02842.1"/>
    <property type="match status" value="1"/>
</dbReference>
<dbReference type="PANTHER" id="PTHR39429">
    <property type="entry name" value="LIGHT-INDEPENDENT PROTOCHLOROPHYLLIDE REDUCTASE SUBUNIT N"/>
    <property type="match status" value="1"/>
</dbReference>
<dbReference type="PANTHER" id="PTHR39429:SF3">
    <property type="entry name" value="LIGHT-INDEPENDENT PROTOCHLOROPHYLLIDE REDUCTASE SUBUNIT N"/>
    <property type="match status" value="1"/>
</dbReference>
<dbReference type="Pfam" id="PF00148">
    <property type="entry name" value="Oxidored_nitro"/>
    <property type="match status" value="1"/>
</dbReference>
<dbReference type="PIRSF" id="PIRSF000162">
    <property type="entry name" value="P_chlorophyll_rd"/>
    <property type="match status" value="1"/>
</dbReference>
<dbReference type="SUPFAM" id="SSF53807">
    <property type="entry name" value="Helical backbone' metal receptor"/>
    <property type="match status" value="1"/>
</dbReference>
<organism>
    <name type="scientific">Roseobacter denitrificans (strain ATCC 33942 / OCh 114)</name>
    <name type="common">Erythrobacter sp. (strain OCh 114)</name>
    <name type="synonym">Roseobacter denitrificans</name>
    <dbReference type="NCBI Taxonomy" id="375451"/>
    <lineage>
        <taxon>Bacteria</taxon>
        <taxon>Pseudomonadati</taxon>
        <taxon>Pseudomonadota</taxon>
        <taxon>Alphaproteobacteria</taxon>
        <taxon>Rhodobacterales</taxon>
        <taxon>Roseobacteraceae</taxon>
        <taxon>Roseobacter</taxon>
    </lineage>
</organism>
<gene>
    <name evidence="1" type="primary">bchN</name>
    <name type="ordered locus">RD1_0139</name>
</gene>
<feature type="chain" id="PRO_1000048397" description="Light-independent protochlorophyllide reductase subunit N">
    <location>
        <begin position="1"/>
        <end position="428"/>
    </location>
</feature>
<feature type="binding site" evidence="1">
    <location>
        <position position="29"/>
    </location>
    <ligand>
        <name>[4Fe-4S] cluster</name>
        <dbReference type="ChEBI" id="CHEBI:49883"/>
        <note>ligand shared with heterodimeric partner</note>
    </ligand>
</feature>
<feature type="binding site" evidence="1">
    <location>
        <position position="54"/>
    </location>
    <ligand>
        <name>[4Fe-4S] cluster</name>
        <dbReference type="ChEBI" id="CHEBI:49883"/>
        <note>ligand shared with heterodimeric partner</note>
    </ligand>
</feature>
<feature type="binding site" evidence="1">
    <location>
        <position position="115"/>
    </location>
    <ligand>
        <name>[4Fe-4S] cluster</name>
        <dbReference type="ChEBI" id="CHEBI:49883"/>
        <note>ligand shared with heterodimeric partner</note>
    </ligand>
</feature>
<comment type="function">
    <text evidence="1">Component of the dark-operative protochlorophyllide reductase (DPOR) that uses Mg-ATP and reduced ferredoxin to reduce ring D of protochlorophyllide (Pchlide) to form chlorophyllide a (Chlide). This reaction is light-independent. The NB-protein (BchN-BchB) is the catalytic component of the complex.</text>
</comment>
<comment type="catalytic activity">
    <reaction evidence="1">
        <text>chlorophyllide a + oxidized 2[4Fe-4S]-[ferredoxin] + 2 ADP + 2 phosphate = protochlorophyllide a + reduced 2[4Fe-4S]-[ferredoxin] + 2 ATP + 2 H2O</text>
        <dbReference type="Rhea" id="RHEA:28202"/>
        <dbReference type="Rhea" id="RHEA-COMP:10002"/>
        <dbReference type="Rhea" id="RHEA-COMP:10004"/>
        <dbReference type="ChEBI" id="CHEBI:15377"/>
        <dbReference type="ChEBI" id="CHEBI:30616"/>
        <dbReference type="ChEBI" id="CHEBI:33722"/>
        <dbReference type="ChEBI" id="CHEBI:33723"/>
        <dbReference type="ChEBI" id="CHEBI:43474"/>
        <dbReference type="ChEBI" id="CHEBI:83348"/>
        <dbReference type="ChEBI" id="CHEBI:83350"/>
        <dbReference type="ChEBI" id="CHEBI:456216"/>
        <dbReference type="EC" id="1.3.7.7"/>
    </reaction>
</comment>
<comment type="cofactor">
    <cofactor evidence="1">
        <name>[4Fe-4S] cluster</name>
        <dbReference type="ChEBI" id="CHEBI:49883"/>
    </cofactor>
    <text evidence="1">Binds 1 [4Fe-4S] cluster per heterodimer. The cluster is bound at the heterodimer interface by residues from both subunits.</text>
</comment>
<comment type="pathway">
    <text evidence="1">Porphyrin-containing compound metabolism; bacteriochlorophyll biosynthesis (light-independent).</text>
</comment>
<comment type="subunit">
    <text evidence="1">Protochlorophyllide reductase is composed of three subunits; BchL, BchN and BchB. Forms a heterotetramer of two BchB and two BchN subunits.</text>
</comment>
<comment type="similarity">
    <text evidence="1">Belongs to the BchN/ChlN family.</text>
</comment>
<name>BCHN_ROSDO</name>
<keyword id="KW-0004">4Fe-4S</keyword>
<keyword id="KW-0067">ATP-binding</keyword>
<keyword id="KW-0077">Bacteriochlorophyll biosynthesis</keyword>
<keyword id="KW-0149">Chlorophyll biosynthesis</keyword>
<keyword id="KW-0408">Iron</keyword>
<keyword id="KW-0411">Iron-sulfur</keyword>
<keyword id="KW-0479">Metal-binding</keyword>
<keyword id="KW-0547">Nucleotide-binding</keyword>
<keyword id="KW-0560">Oxidoreductase</keyword>
<keyword id="KW-0602">Photosynthesis</keyword>
<keyword id="KW-1185">Reference proteome</keyword>
<protein>
    <recommendedName>
        <fullName evidence="1">Light-independent protochlorophyllide reductase subunit N</fullName>
        <shortName evidence="1">DPOR subunit N</shortName>
        <shortName evidence="1">LI-POR subunit N</shortName>
        <ecNumber evidence="1">1.3.7.7</ecNumber>
    </recommendedName>
</protein>
<proteinExistence type="inferred from homology"/>
<evidence type="ECO:0000255" key="1">
    <source>
        <dbReference type="HAMAP-Rule" id="MF_00352"/>
    </source>
</evidence>
<accession>Q16DR9</accession>
<sequence length="428" mass="46298">MTELPRLPAQGGCSNAPILKQRGQREVFCGLTGIIWLHRKMQDAFFLVVGSRTCAHLLQSAAGVMIFAEPRFGTAILEETDLAGLADAQAELDKVVDQLLARRTDIKQLFLVGSCPSEVIKLDLSRAAERMTEKYAPSVRVLNFSGSGIETTFTQGEDACLASMVPVLPKTDTRQLLLVGALPDVVEEQAVSLLEQMGIGPIKVLPAPRADTDLGIGENTVFALTQPFLGDTHGALERRGARHLPAPFPFGEEGTTAWLRVIADEFGVDADTFERVTAAPRARARKAISQASEALRGKTIFFFPDSQLEIPLARFLTRECGMEAIEVGSPFVHKGIIGSDLEMLAQGPVISEGQDVDLQLDRCRAARPDLTVCGLGLANPLEAEGLATKWAIELVFTPVHFYEQAGDLAGLFSRPVRRAGLLKVEAAE</sequence>
<reference key="1">
    <citation type="journal article" date="2007" name="J. Bacteriol.">
        <title>The complete genome sequence of Roseobacter denitrificans reveals a mixotrophic rather than photosynthetic metabolism.</title>
        <authorList>
            <person name="Swingley W.D."/>
            <person name="Sadekar S."/>
            <person name="Mastrian S.D."/>
            <person name="Matthies H.J."/>
            <person name="Hao J."/>
            <person name="Ramos H."/>
            <person name="Acharya C.R."/>
            <person name="Conrad A.L."/>
            <person name="Taylor H.L."/>
            <person name="Dejesa L.C."/>
            <person name="Shah M.K."/>
            <person name="O'Huallachain M.E."/>
            <person name="Lince M.T."/>
            <person name="Blankenship R.E."/>
            <person name="Beatty J.T."/>
            <person name="Touchman J.W."/>
        </authorList>
    </citation>
    <scope>NUCLEOTIDE SEQUENCE [LARGE SCALE GENOMIC DNA]</scope>
    <source>
        <strain>ATCC 33942 / OCh 114</strain>
    </source>
</reference>